<gene>
    <name evidence="1" type="primary">alaS</name>
    <name type="ordered locus">Krad_3032</name>
</gene>
<comment type="function">
    <text evidence="1">Catalyzes the attachment of alanine to tRNA(Ala) in a two-step reaction: alanine is first activated by ATP to form Ala-AMP and then transferred to the acceptor end of tRNA(Ala). Also edits incorrectly charged Ser-tRNA(Ala) and Gly-tRNA(Ala) via its editing domain.</text>
</comment>
<comment type="catalytic activity">
    <reaction evidence="1">
        <text>tRNA(Ala) + L-alanine + ATP = L-alanyl-tRNA(Ala) + AMP + diphosphate</text>
        <dbReference type="Rhea" id="RHEA:12540"/>
        <dbReference type="Rhea" id="RHEA-COMP:9657"/>
        <dbReference type="Rhea" id="RHEA-COMP:9923"/>
        <dbReference type="ChEBI" id="CHEBI:30616"/>
        <dbReference type="ChEBI" id="CHEBI:33019"/>
        <dbReference type="ChEBI" id="CHEBI:57972"/>
        <dbReference type="ChEBI" id="CHEBI:78442"/>
        <dbReference type="ChEBI" id="CHEBI:78497"/>
        <dbReference type="ChEBI" id="CHEBI:456215"/>
        <dbReference type="EC" id="6.1.1.7"/>
    </reaction>
</comment>
<comment type="cofactor">
    <cofactor evidence="1">
        <name>Zn(2+)</name>
        <dbReference type="ChEBI" id="CHEBI:29105"/>
    </cofactor>
    <text evidence="1">Binds 1 zinc ion per subunit.</text>
</comment>
<comment type="subcellular location">
    <subcellularLocation>
        <location evidence="1">Cytoplasm</location>
    </subcellularLocation>
</comment>
<comment type="domain">
    <text evidence="1">Consists of three domains; the N-terminal catalytic domain, the editing domain and the C-terminal C-Ala domain. The editing domain removes incorrectly charged amino acids, while the C-Ala domain, along with tRNA(Ala), serves as a bridge to cooperatively bring together the editing and aminoacylation centers thus stimulating deacylation of misacylated tRNAs.</text>
</comment>
<comment type="similarity">
    <text evidence="1">Belongs to the class-II aminoacyl-tRNA synthetase family.</text>
</comment>
<reference key="1">
    <citation type="journal article" date="2008" name="PLoS ONE">
        <title>Survival in nuclear waste, extreme resistance, and potential applications gleaned from the genome sequence of Kineococcus radiotolerans SRS30216.</title>
        <authorList>
            <person name="Bagwell C.E."/>
            <person name="Bhat S."/>
            <person name="Hawkins G.M."/>
            <person name="Smith B.W."/>
            <person name="Biswas T."/>
            <person name="Hoover T.R."/>
            <person name="Saunders E."/>
            <person name="Han C.S."/>
            <person name="Tsodikov O.V."/>
            <person name="Shimkets L.J."/>
        </authorList>
    </citation>
    <scope>NUCLEOTIDE SEQUENCE [LARGE SCALE GENOMIC DNA]</scope>
    <source>
        <strain>ATCC BAA-149 / DSM 14245 / SRS30216</strain>
    </source>
</reference>
<organism>
    <name type="scientific">Kineococcus radiotolerans (strain ATCC BAA-149 / DSM 14245 / SRS30216)</name>
    <dbReference type="NCBI Taxonomy" id="266940"/>
    <lineage>
        <taxon>Bacteria</taxon>
        <taxon>Bacillati</taxon>
        <taxon>Actinomycetota</taxon>
        <taxon>Actinomycetes</taxon>
        <taxon>Kineosporiales</taxon>
        <taxon>Kineosporiaceae</taxon>
        <taxon>Kineococcus</taxon>
    </lineage>
</organism>
<proteinExistence type="inferred from homology"/>
<dbReference type="EC" id="6.1.1.7" evidence="1"/>
<dbReference type="EMBL" id="CP000750">
    <property type="protein sequence ID" value="ABS04496.1"/>
    <property type="molecule type" value="Genomic_DNA"/>
</dbReference>
<dbReference type="RefSeq" id="WP_012087256.1">
    <property type="nucleotide sequence ID" value="NC_009664.2"/>
</dbReference>
<dbReference type="SMR" id="A6WCF7"/>
<dbReference type="STRING" id="266940.Krad_3032"/>
<dbReference type="KEGG" id="kra:Krad_3032"/>
<dbReference type="eggNOG" id="COG0013">
    <property type="taxonomic scope" value="Bacteria"/>
</dbReference>
<dbReference type="HOGENOM" id="CLU_004485_1_1_11"/>
<dbReference type="OrthoDB" id="9803884at2"/>
<dbReference type="Proteomes" id="UP000001116">
    <property type="component" value="Chromosome"/>
</dbReference>
<dbReference type="GO" id="GO:0005829">
    <property type="term" value="C:cytosol"/>
    <property type="evidence" value="ECO:0007669"/>
    <property type="project" value="TreeGrafter"/>
</dbReference>
<dbReference type="GO" id="GO:0004813">
    <property type="term" value="F:alanine-tRNA ligase activity"/>
    <property type="evidence" value="ECO:0007669"/>
    <property type="project" value="UniProtKB-UniRule"/>
</dbReference>
<dbReference type="GO" id="GO:0002161">
    <property type="term" value="F:aminoacyl-tRNA deacylase activity"/>
    <property type="evidence" value="ECO:0007669"/>
    <property type="project" value="TreeGrafter"/>
</dbReference>
<dbReference type="GO" id="GO:0005524">
    <property type="term" value="F:ATP binding"/>
    <property type="evidence" value="ECO:0007669"/>
    <property type="project" value="UniProtKB-UniRule"/>
</dbReference>
<dbReference type="GO" id="GO:0000049">
    <property type="term" value="F:tRNA binding"/>
    <property type="evidence" value="ECO:0007669"/>
    <property type="project" value="UniProtKB-KW"/>
</dbReference>
<dbReference type="GO" id="GO:0008270">
    <property type="term" value="F:zinc ion binding"/>
    <property type="evidence" value="ECO:0007669"/>
    <property type="project" value="UniProtKB-UniRule"/>
</dbReference>
<dbReference type="GO" id="GO:0006419">
    <property type="term" value="P:alanyl-tRNA aminoacylation"/>
    <property type="evidence" value="ECO:0007669"/>
    <property type="project" value="UniProtKB-UniRule"/>
</dbReference>
<dbReference type="CDD" id="cd00673">
    <property type="entry name" value="AlaRS_core"/>
    <property type="match status" value="1"/>
</dbReference>
<dbReference type="FunFam" id="3.10.310.40:FF:000001">
    <property type="entry name" value="Alanine--tRNA ligase"/>
    <property type="match status" value="1"/>
</dbReference>
<dbReference type="FunFam" id="3.30.54.20:FF:000001">
    <property type="entry name" value="Alanine--tRNA ligase"/>
    <property type="match status" value="1"/>
</dbReference>
<dbReference type="FunFam" id="3.30.980.10:FF:000004">
    <property type="entry name" value="Alanine--tRNA ligase, cytoplasmic"/>
    <property type="match status" value="1"/>
</dbReference>
<dbReference type="Gene3D" id="2.40.30.130">
    <property type="match status" value="1"/>
</dbReference>
<dbReference type="Gene3D" id="3.10.310.40">
    <property type="match status" value="1"/>
</dbReference>
<dbReference type="Gene3D" id="3.30.54.20">
    <property type="match status" value="1"/>
</dbReference>
<dbReference type="Gene3D" id="6.10.250.550">
    <property type="match status" value="1"/>
</dbReference>
<dbReference type="Gene3D" id="3.30.930.10">
    <property type="entry name" value="Bira Bifunctional Protein, Domain 2"/>
    <property type="match status" value="1"/>
</dbReference>
<dbReference type="Gene3D" id="3.30.980.10">
    <property type="entry name" value="Threonyl-trna Synthetase, Chain A, domain 2"/>
    <property type="match status" value="1"/>
</dbReference>
<dbReference type="HAMAP" id="MF_00036_B">
    <property type="entry name" value="Ala_tRNA_synth_B"/>
    <property type="match status" value="1"/>
</dbReference>
<dbReference type="InterPro" id="IPR045864">
    <property type="entry name" value="aa-tRNA-synth_II/BPL/LPL"/>
</dbReference>
<dbReference type="InterPro" id="IPR002318">
    <property type="entry name" value="Ala-tRNA-lgiase_IIc"/>
</dbReference>
<dbReference type="InterPro" id="IPR018162">
    <property type="entry name" value="Ala-tRNA-ligase_IIc_anticod-bd"/>
</dbReference>
<dbReference type="InterPro" id="IPR018165">
    <property type="entry name" value="Ala-tRNA-synth_IIc_core"/>
</dbReference>
<dbReference type="InterPro" id="IPR018164">
    <property type="entry name" value="Ala-tRNA-synth_IIc_N"/>
</dbReference>
<dbReference type="InterPro" id="IPR050058">
    <property type="entry name" value="Ala-tRNA_ligase"/>
</dbReference>
<dbReference type="InterPro" id="IPR023033">
    <property type="entry name" value="Ala_tRNA_ligase_euk/bac"/>
</dbReference>
<dbReference type="InterPro" id="IPR003156">
    <property type="entry name" value="DHHA1_dom"/>
</dbReference>
<dbReference type="InterPro" id="IPR018163">
    <property type="entry name" value="Thr/Ala-tRNA-synth_IIc_edit"/>
</dbReference>
<dbReference type="InterPro" id="IPR009000">
    <property type="entry name" value="Transl_B-barrel_sf"/>
</dbReference>
<dbReference type="InterPro" id="IPR012947">
    <property type="entry name" value="tRNA_SAD"/>
</dbReference>
<dbReference type="NCBIfam" id="TIGR00344">
    <property type="entry name" value="alaS"/>
    <property type="match status" value="1"/>
</dbReference>
<dbReference type="PANTHER" id="PTHR11777:SF9">
    <property type="entry name" value="ALANINE--TRNA LIGASE, CYTOPLASMIC"/>
    <property type="match status" value="1"/>
</dbReference>
<dbReference type="PANTHER" id="PTHR11777">
    <property type="entry name" value="ALANYL-TRNA SYNTHETASE"/>
    <property type="match status" value="1"/>
</dbReference>
<dbReference type="Pfam" id="PF02272">
    <property type="entry name" value="DHHA1"/>
    <property type="match status" value="1"/>
</dbReference>
<dbReference type="Pfam" id="PF01411">
    <property type="entry name" value="tRNA-synt_2c"/>
    <property type="match status" value="1"/>
</dbReference>
<dbReference type="Pfam" id="PF07973">
    <property type="entry name" value="tRNA_SAD"/>
    <property type="match status" value="1"/>
</dbReference>
<dbReference type="PRINTS" id="PR00980">
    <property type="entry name" value="TRNASYNTHALA"/>
</dbReference>
<dbReference type="SMART" id="SM00863">
    <property type="entry name" value="tRNA_SAD"/>
    <property type="match status" value="1"/>
</dbReference>
<dbReference type="SUPFAM" id="SSF55681">
    <property type="entry name" value="Class II aaRS and biotin synthetases"/>
    <property type="match status" value="1"/>
</dbReference>
<dbReference type="SUPFAM" id="SSF101353">
    <property type="entry name" value="Putative anticodon-binding domain of alanyl-tRNA synthetase (AlaRS)"/>
    <property type="match status" value="1"/>
</dbReference>
<dbReference type="SUPFAM" id="SSF55186">
    <property type="entry name" value="ThrRS/AlaRS common domain"/>
    <property type="match status" value="1"/>
</dbReference>
<dbReference type="SUPFAM" id="SSF50447">
    <property type="entry name" value="Translation proteins"/>
    <property type="match status" value="1"/>
</dbReference>
<dbReference type="PROSITE" id="PS50860">
    <property type="entry name" value="AA_TRNA_LIGASE_II_ALA"/>
    <property type="match status" value="1"/>
</dbReference>
<sequence length="893" mass="95953">MQTAEIRRRWLDFFERKEHTVVPSASLVSSDPSLMFTVAGMVPFIPYLTAQVPAPYKRATSVQKCLRTLDIDEVGKTTRHGTFFQMNGNFSFGDYFKREAVAFAWELLTTPEADGGLGFDPERLWTTVYLDDDEAFQLWREVGMPAERIQRRGKADNYWNTGQPGPGGPCSEIYFDRGPAYGAEGGPEADEDRYIEIWNLVFMQYQLSAVRTKVDFDVEGELPAKNIDTGMGLERVAFLKQGVDNMYEIDEVRPVLDKAAELSGRRYGAVHEDDVRMRVVADHVRSALMLIGDGVTPGNEGAGYVLRRLVRRAVRAMRLLGVEEPALPHLLPASMEVMSASYPQLRSDFERISAVAYAEEDAFRRTLVSGTAIFETAVAQTKAAGGSSLSGERAFALHDTYGFPIDLTLEMAAEAGVGVDEPGFRALMAEQVGRAKADAKAKKTGGVDLAIYRSTLEQLPAPVVFTGYEAAAGEARISVVLQGGVSTPSAPAGTDVEVVLDRTPFYAEGGGQLADHGTVTTTSGAVLAVSDVQQPVRGLYVHKGTVTSGELVAGDAVHAVVDAGRRRSISRAHTATHLVHQVVREHLGDTATQAGSQNAPGRMRFDYRSTAQVAGDVVRDIEAVVNERIHDDLEVSAAVMDRESALNSGAMALFGEKYGEKVRVVSIGEDWSKELCGGTHTLTSQQVGLVSIVSESSIGSGARRIEALVGADAFDFLTREHLLVNQLTEVVKARPEELPDRIGALLTRLGDAEKEIARLRGGQVLALAPTIAAKPVDKFGVRVVTHDAGPVSADDLRTLVLDVRSRLGEERPSVVAVAGVAKDRPVVVVATNAEARRWGVKAGELVRTAAKTLGGGGGGKDDLAQGGGQDPSKVPAALQGIEDFVGARVTGSV</sequence>
<evidence type="ECO:0000255" key="1">
    <source>
        <dbReference type="HAMAP-Rule" id="MF_00036"/>
    </source>
</evidence>
<evidence type="ECO:0000256" key="2">
    <source>
        <dbReference type="SAM" id="MobiDB-lite"/>
    </source>
</evidence>
<accession>A6WCF7</accession>
<name>SYA_KINRD</name>
<keyword id="KW-0030">Aminoacyl-tRNA synthetase</keyword>
<keyword id="KW-0067">ATP-binding</keyword>
<keyword id="KW-0963">Cytoplasm</keyword>
<keyword id="KW-0436">Ligase</keyword>
<keyword id="KW-0479">Metal-binding</keyword>
<keyword id="KW-0547">Nucleotide-binding</keyword>
<keyword id="KW-0648">Protein biosynthesis</keyword>
<keyword id="KW-1185">Reference proteome</keyword>
<keyword id="KW-0694">RNA-binding</keyword>
<keyword id="KW-0820">tRNA-binding</keyword>
<keyword id="KW-0862">Zinc</keyword>
<protein>
    <recommendedName>
        <fullName evidence="1">Alanine--tRNA ligase</fullName>
        <ecNumber evidence="1">6.1.1.7</ecNumber>
    </recommendedName>
    <alternativeName>
        <fullName evidence="1">Alanyl-tRNA synthetase</fullName>
        <shortName evidence="1">AlaRS</shortName>
    </alternativeName>
</protein>
<feature type="chain" id="PRO_0000347640" description="Alanine--tRNA ligase">
    <location>
        <begin position="1"/>
        <end position="893"/>
    </location>
</feature>
<feature type="region of interest" description="Disordered" evidence="2">
    <location>
        <begin position="853"/>
        <end position="872"/>
    </location>
</feature>
<feature type="binding site" evidence="1">
    <location>
        <position position="573"/>
    </location>
    <ligand>
        <name>Zn(2+)</name>
        <dbReference type="ChEBI" id="CHEBI:29105"/>
    </ligand>
</feature>
<feature type="binding site" evidence="1">
    <location>
        <position position="577"/>
    </location>
    <ligand>
        <name>Zn(2+)</name>
        <dbReference type="ChEBI" id="CHEBI:29105"/>
    </ligand>
</feature>
<feature type="binding site" evidence="1">
    <location>
        <position position="676"/>
    </location>
    <ligand>
        <name>Zn(2+)</name>
        <dbReference type="ChEBI" id="CHEBI:29105"/>
    </ligand>
</feature>
<feature type="binding site" evidence="1">
    <location>
        <position position="680"/>
    </location>
    <ligand>
        <name>Zn(2+)</name>
        <dbReference type="ChEBI" id="CHEBI:29105"/>
    </ligand>
</feature>